<organism>
    <name type="scientific">Homo sapiens</name>
    <name type="common">Human</name>
    <dbReference type="NCBI Taxonomy" id="9606"/>
    <lineage>
        <taxon>Eukaryota</taxon>
        <taxon>Metazoa</taxon>
        <taxon>Chordata</taxon>
        <taxon>Craniata</taxon>
        <taxon>Vertebrata</taxon>
        <taxon>Euteleostomi</taxon>
        <taxon>Mammalia</taxon>
        <taxon>Eutheria</taxon>
        <taxon>Euarchontoglires</taxon>
        <taxon>Primates</taxon>
        <taxon>Haplorrhini</taxon>
        <taxon>Catarrhini</taxon>
        <taxon>Hominidae</taxon>
        <taxon>Homo</taxon>
    </lineage>
</organism>
<sequence>MGKSIPQYLGQLDIRKSVVSLATGAGAIYLLYKAIKAGIKCKPPLCSNSPICIARLAVERERHGRDSGELRRLLNSLECKQDEYAKSMILHSITRCVYLLEAEASACTTDDIVLLGYMLDDKDNSVKTQALNTLKAFSGIRKFRLKIQEHSIKVLELISTIWDTELHIAGLRLLNNLPLPDYVHPQLRRVMPALMEILQSDYILAQVQAVRLLSYLAQKNDLLYDILNCQVHSNFLNLFQPTQSGSLLYEVLVFAERLSEGRNAPHYHVVKWHYNEQSLHESLFGEESRLADRLLALVIHPEEDVQIQACKVIVSLQYPQDLRARPSSCQPSRSYFKNTE</sequence>
<reference key="1">
    <citation type="journal article" date="2004" name="Nat. Genet.">
        <title>Complete sequencing and characterization of 21,243 full-length human cDNAs.</title>
        <authorList>
            <person name="Ota T."/>
            <person name="Suzuki Y."/>
            <person name="Nishikawa T."/>
            <person name="Otsuki T."/>
            <person name="Sugiyama T."/>
            <person name="Irie R."/>
            <person name="Wakamatsu A."/>
            <person name="Hayashi K."/>
            <person name="Sato H."/>
            <person name="Nagai K."/>
            <person name="Kimura K."/>
            <person name="Makita H."/>
            <person name="Sekine M."/>
            <person name="Obayashi M."/>
            <person name="Nishi T."/>
            <person name="Shibahara T."/>
            <person name="Tanaka T."/>
            <person name="Ishii S."/>
            <person name="Yamamoto J."/>
            <person name="Saito K."/>
            <person name="Kawai Y."/>
            <person name="Isono Y."/>
            <person name="Nakamura Y."/>
            <person name="Nagahari K."/>
            <person name="Murakami K."/>
            <person name="Yasuda T."/>
            <person name="Iwayanagi T."/>
            <person name="Wagatsuma M."/>
            <person name="Shiratori A."/>
            <person name="Sudo H."/>
            <person name="Hosoiri T."/>
            <person name="Kaku Y."/>
            <person name="Kodaira H."/>
            <person name="Kondo H."/>
            <person name="Sugawara M."/>
            <person name="Takahashi M."/>
            <person name="Kanda K."/>
            <person name="Yokoi T."/>
            <person name="Furuya T."/>
            <person name="Kikkawa E."/>
            <person name="Omura Y."/>
            <person name="Abe K."/>
            <person name="Kamihara K."/>
            <person name="Katsuta N."/>
            <person name="Sato K."/>
            <person name="Tanikawa M."/>
            <person name="Yamazaki M."/>
            <person name="Ninomiya K."/>
            <person name="Ishibashi T."/>
            <person name="Yamashita H."/>
            <person name="Murakawa K."/>
            <person name="Fujimori K."/>
            <person name="Tanai H."/>
            <person name="Kimata M."/>
            <person name="Watanabe M."/>
            <person name="Hiraoka S."/>
            <person name="Chiba Y."/>
            <person name="Ishida S."/>
            <person name="Ono Y."/>
            <person name="Takiguchi S."/>
            <person name="Watanabe S."/>
            <person name="Yosida M."/>
            <person name="Hotuta T."/>
            <person name="Kusano J."/>
            <person name="Kanehori K."/>
            <person name="Takahashi-Fujii A."/>
            <person name="Hara H."/>
            <person name="Tanase T.-O."/>
            <person name="Nomura Y."/>
            <person name="Togiya S."/>
            <person name="Komai F."/>
            <person name="Hara R."/>
            <person name="Takeuchi K."/>
            <person name="Arita M."/>
            <person name="Imose N."/>
            <person name="Musashino K."/>
            <person name="Yuuki H."/>
            <person name="Oshima A."/>
            <person name="Sasaki N."/>
            <person name="Aotsuka S."/>
            <person name="Yoshikawa Y."/>
            <person name="Matsunawa H."/>
            <person name="Ichihara T."/>
            <person name="Shiohata N."/>
            <person name="Sano S."/>
            <person name="Moriya S."/>
            <person name="Momiyama H."/>
            <person name="Satoh N."/>
            <person name="Takami S."/>
            <person name="Terashima Y."/>
            <person name="Suzuki O."/>
            <person name="Nakagawa S."/>
            <person name="Senoh A."/>
            <person name="Mizoguchi H."/>
            <person name="Goto Y."/>
            <person name="Shimizu F."/>
            <person name="Wakebe H."/>
            <person name="Hishigaki H."/>
            <person name="Watanabe T."/>
            <person name="Sugiyama A."/>
            <person name="Takemoto M."/>
            <person name="Kawakami B."/>
            <person name="Yamazaki M."/>
            <person name="Watanabe K."/>
            <person name="Kumagai A."/>
            <person name="Itakura S."/>
            <person name="Fukuzumi Y."/>
            <person name="Fujimori Y."/>
            <person name="Komiyama M."/>
            <person name="Tashiro H."/>
            <person name="Tanigami A."/>
            <person name="Fujiwara T."/>
            <person name="Ono T."/>
            <person name="Yamada K."/>
            <person name="Fujii Y."/>
            <person name="Ozaki K."/>
            <person name="Hirao M."/>
            <person name="Ohmori Y."/>
            <person name="Kawabata A."/>
            <person name="Hikiji T."/>
            <person name="Kobatake N."/>
            <person name="Inagaki H."/>
            <person name="Ikema Y."/>
            <person name="Okamoto S."/>
            <person name="Okitani R."/>
            <person name="Kawakami T."/>
            <person name="Noguchi S."/>
            <person name="Itoh T."/>
            <person name="Shigeta K."/>
            <person name="Senba T."/>
            <person name="Matsumura K."/>
            <person name="Nakajima Y."/>
            <person name="Mizuno T."/>
            <person name="Morinaga M."/>
            <person name="Sasaki M."/>
            <person name="Togashi T."/>
            <person name="Oyama M."/>
            <person name="Hata H."/>
            <person name="Watanabe M."/>
            <person name="Komatsu T."/>
            <person name="Mizushima-Sugano J."/>
            <person name="Satoh T."/>
            <person name="Shirai Y."/>
            <person name="Takahashi Y."/>
            <person name="Nakagawa K."/>
            <person name="Okumura K."/>
            <person name="Nagase T."/>
            <person name="Nomura N."/>
            <person name="Kikuchi H."/>
            <person name="Masuho Y."/>
            <person name="Yamashita R."/>
            <person name="Nakai K."/>
            <person name="Yada T."/>
            <person name="Nakamura Y."/>
            <person name="Ohara O."/>
            <person name="Isogai T."/>
            <person name="Sugano S."/>
        </authorList>
    </citation>
    <scope>NUCLEOTIDE SEQUENCE [LARGE SCALE MRNA] (ISOFORM 3)</scope>
    <source>
        <tissue>Testis</tissue>
    </source>
</reference>
<reference key="2">
    <citation type="journal article" date="2003" name="Nature">
        <title>The DNA sequence and analysis of human chromosome 6.</title>
        <authorList>
            <person name="Mungall A.J."/>
            <person name="Palmer S.A."/>
            <person name="Sims S.K."/>
            <person name="Edwards C.A."/>
            <person name="Ashurst J.L."/>
            <person name="Wilming L."/>
            <person name="Jones M.C."/>
            <person name="Horton R."/>
            <person name="Hunt S.E."/>
            <person name="Scott C.E."/>
            <person name="Gilbert J.G.R."/>
            <person name="Clamp M.E."/>
            <person name="Bethel G."/>
            <person name="Milne S."/>
            <person name="Ainscough R."/>
            <person name="Almeida J.P."/>
            <person name="Ambrose K.D."/>
            <person name="Andrews T.D."/>
            <person name="Ashwell R.I.S."/>
            <person name="Babbage A.K."/>
            <person name="Bagguley C.L."/>
            <person name="Bailey J."/>
            <person name="Banerjee R."/>
            <person name="Barker D.J."/>
            <person name="Barlow K.F."/>
            <person name="Bates K."/>
            <person name="Beare D.M."/>
            <person name="Beasley H."/>
            <person name="Beasley O."/>
            <person name="Bird C.P."/>
            <person name="Blakey S.E."/>
            <person name="Bray-Allen S."/>
            <person name="Brook J."/>
            <person name="Brown A.J."/>
            <person name="Brown J.Y."/>
            <person name="Burford D.C."/>
            <person name="Burrill W."/>
            <person name="Burton J."/>
            <person name="Carder C."/>
            <person name="Carter N.P."/>
            <person name="Chapman J.C."/>
            <person name="Clark S.Y."/>
            <person name="Clark G."/>
            <person name="Clee C.M."/>
            <person name="Clegg S."/>
            <person name="Cobley V."/>
            <person name="Collier R.E."/>
            <person name="Collins J.E."/>
            <person name="Colman L.K."/>
            <person name="Corby N.R."/>
            <person name="Coville G.J."/>
            <person name="Culley K.M."/>
            <person name="Dhami P."/>
            <person name="Davies J."/>
            <person name="Dunn M."/>
            <person name="Earthrowl M.E."/>
            <person name="Ellington A.E."/>
            <person name="Evans K.A."/>
            <person name="Faulkner L."/>
            <person name="Francis M.D."/>
            <person name="Frankish A."/>
            <person name="Frankland J."/>
            <person name="French L."/>
            <person name="Garner P."/>
            <person name="Garnett J."/>
            <person name="Ghori M.J."/>
            <person name="Gilby L.M."/>
            <person name="Gillson C.J."/>
            <person name="Glithero R.J."/>
            <person name="Grafham D.V."/>
            <person name="Grant M."/>
            <person name="Gribble S."/>
            <person name="Griffiths C."/>
            <person name="Griffiths M.N.D."/>
            <person name="Hall R."/>
            <person name="Halls K.S."/>
            <person name="Hammond S."/>
            <person name="Harley J.L."/>
            <person name="Hart E.A."/>
            <person name="Heath P.D."/>
            <person name="Heathcott R."/>
            <person name="Holmes S.J."/>
            <person name="Howden P.J."/>
            <person name="Howe K.L."/>
            <person name="Howell G.R."/>
            <person name="Huckle E."/>
            <person name="Humphray S.J."/>
            <person name="Humphries M.D."/>
            <person name="Hunt A.R."/>
            <person name="Johnson C.M."/>
            <person name="Joy A.A."/>
            <person name="Kay M."/>
            <person name="Keenan S.J."/>
            <person name="Kimberley A.M."/>
            <person name="King A."/>
            <person name="Laird G.K."/>
            <person name="Langford C."/>
            <person name="Lawlor S."/>
            <person name="Leongamornlert D.A."/>
            <person name="Leversha M."/>
            <person name="Lloyd C.R."/>
            <person name="Lloyd D.M."/>
            <person name="Loveland J.E."/>
            <person name="Lovell J."/>
            <person name="Martin S."/>
            <person name="Mashreghi-Mohammadi M."/>
            <person name="Maslen G.L."/>
            <person name="Matthews L."/>
            <person name="McCann O.T."/>
            <person name="McLaren S.J."/>
            <person name="McLay K."/>
            <person name="McMurray A."/>
            <person name="Moore M.J.F."/>
            <person name="Mullikin J.C."/>
            <person name="Niblett D."/>
            <person name="Nickerson T."/>
            <person name="Novik K.L."/>
            <person name="Oliver K."/>
            <person name="Overton-Larty E.K."/>
            <person name="Parker A."/>
            <person name="Patel R."/>
            <person name="Pearce A.V."/>
            <person name="Peck A.I."/>
            <person name="Phillimore B.J.C.T."/>
            <person name="Phillips S."/>
            <person name="Plumb R.W."/>
            <person name="Porter K.M."/>
            <person name="Ramsey Y."/>
            <person name="Ranby S.A."/>
            <person name="Rice C.M."/>
            <person name="Ross M.T."/>
            <person name="Searle S.M."/>
            <person name="Sehra H.K."/>
            <person name="Sheridan E."/>
            <person name="Skuce C.D."/>
            <person name="Smith S."/>
            <person name="Smith M."/>
            <person name="Spraggon L."/>
            <person name="Squares S.L."/>
            <person name="Steward C.A."/>
            <person name="Sycamore N."/>
            <person name="Tamlyn-Hall G."/>
            <person name="Tester J."/>
            <person name="Theaker A.J."/>
            <person name="Thomas D.W."/>
            <person name="Thorpe A."/>
            <person name="Tracey A."/>
            <person name="Tromans A."/>
            <person name="Tubby B."/>
            <person name="Wall M."/>
            <person name="Wallis J.M."/>
            <person name="West A.P."/>
            <person name="White S.S."/>
            <person name="Whitehead S.L."/>
            <person name="Whittaker H."/>
            <person name="Wild A."/>
            <person name="Willey D.J."/>
            <person name="Wilmer T.E."/>
            <person name="Wood J.M."/>
            <person name="Wray P.W."/>
            <person name="Wyatt J.C."/>
            <person name="Young L."/>
            <person name="Younger R.M."/>
            <person name="Bentley D.R."/>
            <person name="Coulson A."/>
            <person name="Durbin R.M."/>
            <person name="Hubbard T."/>
            <person name="Sulston J.E."/>
            <person name="Dunham I."/>
            <person name="Rogers J."/>
            <person name="Beck S."/>
        </authorList>
    </citation>
    <scope>NUCLEOTIDE SEQUENCE [LARGE SCALE GENOMIC DNA]</scope>
</reference>
<reference key="3">
    <citation type="journal article" date="2004" name="Genome Res.">
        <title>The status, quality, and expansion of the NIH full-length cDNA project: the Mammalian Gene Collection (MGC).</title>
        <authorList>
            <consortium name="The MGC Project Team"/>
        </authorList>
    </citation>
    <scope>NUCLEOTIDE SEQUENCE [LARGE SCALE MRNA] (ISOFORM 2)</scope>
    <source>
        <tissue>Testis</tissue>
    </source>
</reference>
<reference key="4">
    <citation type="journal article" date="2018" name="Nat. Commun.">
        <title>Armadillo repeat containing 12 promotes neuroblastoma progression through interaction with retinoblastoma binding protein 4.</title>
        <authorList>
            <person name="Li D."/>
            <person name="Song H."/>
            <person name="Mei H."/>
            <person name="Fang E."/>
            <person name="Wang X."/>
            <person name="Yang F."/>
            <person name="Li H."/>
            <person name="Chen Y."/>
            <person name="Huang K."/>
            <person name="Zheng L."/>
            <person name="Tong Q."/>
        </authorList>
    </citation>
    <scope>FUNCTION</scope>
    <scope>SUBCELLULAR LOCATION</scope>
    <scope>TISSUE SPECIFICITY</scope>
    <scope>INTERACTION WITH RBBP4</scope>
    <scope>MUTAGENESIS OF VAL-190</scope>
</reference>
<reference key="5">
    <citation type="journal article" date="2021" name="Proc. Natl. Acad. Sci. U.S.A.">
        <title>ARMC12 regulates spatiotemporal mitochondrial dynamics during spermiogenesis and is required for male fertility.</title>
        <authorList>
            <person name="Shimada K."/>
            <person name="Park S."/>
            <person name="Miyata H."/>
            <person name="Yu Z."/>
            <person name="Morohoshi A."/>
            <person name="Oura S."/>
            <person name="Matzuk M.M."/>
            <person name="Ikawa M."/>
        </authorList>
    </citation>
    <scope>TISSUE SPECIFICITY</scope>
</reference>
<reference key="6">
    <citation type="journal article" date="2023" name="J. Med. Genet.">
        <title>Biallelic mutations in ARMC12 cause asthenozoospermia and multiple midpiece defects in humans and mice.</title>
        <authorList>
            <person name="Liu W."/>
            <person name="Wei X."/>
            <person name="Liu X."/>
            <person name="Chen G."/>
            <person name="Zhang X."/>
            <person name="Liang X."/>
            <person name="Isachenko V."/>
            <person name="Sha Y."/>
            <person name="Wang Y."/>
        </authorList>
    </citation>
    <scope>VARIANTS SPGF90 GLN-211; PRO-212 AND TYR-229</scope>
    <scope>INVOLVEMENT IN SPGF90</scope>
    <scope>TISSUE SPECIFICITY</scope>
</reference>
<proteinExistence type="evidence at protein level"/>
<accession>Q5T9G4</accession>
<accession>Q8NEB2</accession>
<accession>Q96LL8</accession>
<gene>
    <name type="primary">ARMC12</name>
    <name type="synonym">C6orf81</name>
</gene>
<name>ARM12_HUMAN</name>
<comment type="function">
    <text evidence="1 2">Essential for male fertility and sperm mitochondrial sheath formation (By similarity). Required for proper mitochondrial elongation and coiling along the flagellum during the formation of the mitochondrial sheath (By similarity). Facilitates the growth and aggressiveness of neuroblastoma cells (PubMed:30026490). Increases the EZH2 activity and H3K27me3 levels in a RBBP4-dependent manner, and facilitates the enrichment of polycomb repressive complex 2 and H3K27me3 on gene promoters, resulting in transcriptional repression of tumor suppressors affecting the proliferation, invasion, and metastasis of tumor cells (PubMed:30026490).</text>
</comment>
<comment type="subunit">
    <text evidence="1 2">Interacts with TBC1D15, TBC1D21, GK2 and IMMT (By similarity). Interacts with VDAC2 and VDAC3 in a TBC1D21-dependent manner (By similarity). Interacts (via ARM domains) with RBBP4 (PubMed:30026490).</text>
</comment>
<comment type="interaction">
    <interactant intactId="EBI-36513937">
        <id>Q5T9G4-2</id>
    </interactant>
    <interactant intactId="EBI-2339219">
        <id>Q08426</id>
        <label>EHHADH</label>
    </interactant>
    <organismsDiffer>false</organismsDiffer>
    <experiments>3</experiments>
</comment>
<comment type="interaction">
    <interactant intactId="EBI-36513937">
        <id>Q5T9G4-2</id>
    </interactant>
    <interactant intactId="EBI-11337888">
        <id>Q7L5A8</id>
        <label>FA2H</label>
    </interactant>
    <organismsDiffer>false</organismsDiffer>
    <experiments>3</experiments>
</comment>
<comment type="interaction">
    <interactant intactId="EBI-36513937">
        <id>Q5T9G4-2</id>
    </interactant>
    <interactant intactId="EBI-9304251">
        <id>Q05329</id>
        <label>GAD2</label>
    </interactant>
    <organismsDiffer>false</organismsDiffer>
    <experiments>3</experiments>
</comment>
<comment type="interaction">
    <interactant intactId="EBI-36513937">
        <id>Q5T9G4-2</id>
    </interactant>
    <interactant intactId="EBI-714881">
        <id>Q9HC62</id>
        <label>SENP2</label>
    </interactant>
    <organismsDiffer>false</organismsDiffer>
    <experiments>3</experiments>
</comment>
<comment type="interaction">
    <interactant intactId="EBI-36513937">
        <id>Q5T9G4-2</id>
    </interactant>
    <interactant intactId="EBI-2822329">
        <id>Q13596</id>
        <label>SNX1</label>
    </interactant>
    <organismsDiffer>false</organismsDiffer>
    <experiments>3</experiments>
</comment>
<comment type="interaction">
    <interactant intactId="EBI-36513937">
        <id>Q5T9G4-2</id>
    </interactant>
    <interactant intactId="EBI-742688">
        <id>Q9NZD8</id>
        <label>SPG21</label>
    </interactant>
    <organismsDiffer>false</organismsDiffer>
    <experiments>3</experiments>
</comment>
<comment type="interaction">
    <interactant intactId="EBI-36513937">
        <id>Q5T9G4-2</id>
    </interactant>
    <interactant intactId="EBI-10210710">
        <id>P49638</id>
        <label>TTPA</label>
    </interactant>
    <organismsDiffer>false</organismsDiffer>
    <experiments>3</experiments>
</comment>
<comment type="subcellular location">
    <subcellularLocation>
        <location evidence="2">Nucleus</location>
    </subcellularLocation>
    <subcellularLocation>
        <location evidence="1">Mitochondrion outer membrane</location>
        <topology evidence="1">Peripheral membrane protein</topology>
    </subcellularLocation>
</comment>
<comment type="alternative products">
    <event type="alternative splicing"/>
    <isoform>
        <id>Q5T9G4-1</id>
        <name>1</name>
        <sequence type="displayed"/>
    </isoform>
    <isoform>
        <id>Q5T9G4-2</id>
        <name>2</name>
        <sequence type="described" ref="VSP_017800"/>
    </isoform>
    <isoform>
        <id>Q5T9G4-3</id>
        <name>3</name>
        <sequence type="described" ref="VSP_017801"/>
    </isoform>
</comment>
<comment type="tissue specificity">
    <text evidence="2 3 4">Expressed in testis (PubMed:33536340, PubMed:35534203). Highly expressed in the mid-piece of the elongated and late spermatids (PubMed:35534203). Expressed at higher levels in neuroblastoma tissues and cell lines, than those of normal dorsal ganglia (at protein level) (PubMed:30026490). Expressed in breast cancer, colon cancer, hepatocellular carcinoma, lung cancer, pancreas cancer, prostate cancer, renal cancer and gastric cancer, but not in their normal counterparts (PubMed:30026490).</text>
</comment>
<comment type="disease" evidence="4">
    <disease id="DI-06862">
        <name>Spermatogenic failure 90</name>
        <acronym>SPGF90</acronym>
        <description>An autosomal recessive male infertility disorder due to severely reduced progressive motility of sperm.</description>
        <dbReference type="MIM" id="620744"/>
    </disease>
    <text>The disease may be caused by variants affecting the gene represented in this entry.</text>
</comment>
<protein>
    <recommendedName>
        <fullName>Armadillo repeat-containing protein 12</fullName>
    </recommendedName>
</protein>
<feature type="chain" id="PRO_0000230163" description="Armadillo repeat-containing protein 12">
    <location>
        <begin position="1"/>
        <end position="340"/>
    </location>
</feature>
<feature type="repeat" description="ARM 1">
    <location>
        <begin position="100"/>
        <end position="139"/>
    </location>
</feature>
<feature type="repeat" description="ARM 2">
    <location>
        <begin position="179"/>
        <end position="218"/>
    </location>
</feature>
<feature type="repeat" description="ARM 3">
    <location>
        <begin position="278"/>
        <end position="318"/>
    </location>
</feature>
<feature type="region of interest" description="Interaction with TBC1D15" evidence="1">
    <location>
        <begin position="1"/>
        <end position="101"/>
    </location>
</feature>
<feature type="splice variant" id="VSP_017800" description="In isoform 2." evidence="6">
    <original>R</original>
    <variation>RECPGPGERALPQEAPAPEASAVGGPKG</variation>
    <location>
        <position position="55"/>
    </location>
</feature>
<feature type="splice variant" id="VSP_017801" description="In isoform 3." evidence="5">
    <location>
        <begin position="230"/>
        <end position="239"/>
    </location>
</feature>
<feature type="sequence variant" id="VAR_089386" description="In SPGF90; uncertain significance; dbSNP:rs200319789." evidence="4">
    <original>R</original>
    <variation>Q</variation>
    <location>
        <position position="211"/>
    </location>
</feature>
<feature type="sequence variant" id="VAR_089387" description="In SPGF90; uncertain significance; dbSNP:rs776728534." evidence="4">
    <original>L</original>
    <variation>P</variation>
    <location>
        <position position="212"/>
    </location>
</feature>
<feature type="sequence variant" id="VAR_089388" description="In SPGF90; uncertain significance; dbSNP:rs200749169." evidence="4">
    <original>C</original>
    <variation>Y</variation>
    <location>
        <position position="229"/>
    </location>
</feature>
<feature type="mutagenesis site" description="Loss of interaction with RBBP4." evidence="2">
    <original>V</original>
    <variation>A</variation>
    <location>
        <position position="190"/>
    </location>
</feature>
<evidence type="ECO:0000250" key="1">
    <source>
        <dbReference type="UniProtKB" id="Q80X86"/>
    </source>
</evidence>
<evidence type="ECO:0000269" key="2">
    <source>
    </source>
</evidence>
<evidence type="ECO:0000269" key="3">
    <source>
    </source>
</evidence>
<evidence type="ECO:0000269" key="4">
    <source>
    </source>
</evidence>
<evidence type="ECO:0000303" key="5">
    <source>
    </source>
</evidence>
<evidence type="ECO:0000303" key="6">
    <source>
    </source>
</evidence>
<dbReference type="EMBL" id="AK058119">
    <property type="protein sequence ID" value="BAB71672.1"/>
    <property type="molecule type" value="mRNA"/>
</dbReference>
<dbReference type="EMBL" id="AL157823">
    <property type="status" value="NOT_ANNOTATED_CDS"/>
    <property type="molecule type" value="Genomic_DNA"/>
</dbReference>
<dbReference type="EMBL" id="BC033033">
    <property type="protein sequence ID" value="AAH33033.1"/>
    <property type="molecule type" value="mRNA"/>
</dbReference>
<dbReference type="CCDS" id="CCDS4809.1">
    <molecule id="Q5T9G4-2"/>
</dbReference>
<dbReference type="CCDS" id="CCDS69093.1">
    <molecule id="Q5T9G4-1"/>
</dbReference>
<dbReference type="CCDS" id="CCDS69094.1">
    <molecule id="Q5T9G4-3"/>
</dbReference>
<dbReference type="RefSeq" id="NP_001273503.1">
    <molecule id="Q5T9G4-1"/>
    <property type="nucleotide sequence ID" value="NM_001286574.2"/>
</dbReference>
<dbReference type="RefSeq" id="NP_001273505.1">
    <molecule id="Q5T9G4-3"/>
    <property type="nucleotide sequence ID" value="NM_001286576.2"/>
</dbReference>
<dbReference type="RefSeq" id="NP_659465.2">
    <molecule id="Q5T9G4-2"/>
    <property type="nucleotide sequence ID" value="NM_145028.4"/>
</dbReference>
<dbReference type="RefSeq" id="XP_016865924.1">
    <molecule id="Q5T9G4-2"/>
    <property type="nucleotide sequence ID" value="XM_017010435.3"/>
</dbReference>
<dbReference type="RefSeq" id="XP_047274299.1">
    <molecule id="Q5T9G4-2"/>
    <property type="nucleotide sequence ID" value="XM_047418343.1"/>
</dbReference>
<dbReference type="RefSeq" id="XP_047274300.1">
    <molecule id="Q5T9G4-2"/>
    <property type="nucleotide sequence ID" value="XM_047418344.1"/>
</dbReference>
<dbReference type="RefSeq" id="XP_047274301.1">
    <molecule id="Q5T9G4-2"/>
    <property type="nucleotide sequence ID" value="XM_047418345.1"/>
</dbReference>
<dbReference type="RefSeq" id="XP_047274302.1">
    <molecule id="Q5T9G4-2"/>
    <property type="nucleotide sequence ID" value="XM_047418346.1"/>
</dbReference>
<dbReference type="RefSeq" id="XP_047274303.1">
    <molecule id="Q5T9G4-1"/>
    <property type="nucleotide sequence ID" value="XM_047418347.1"/>
</dbReference>
<dbReference type="RefSeq" id="XP_047274304.1">
    <molecule id="Q5T9G4-1"/>
    <property type="nucleotide sequence ID" value="XM_047418348.1"/>
</dbReference>
<dbReference type="RefSeq" id="XP_054210566.1">
    <molecule id="Q5T9G4-2"/>
    <property type="nucleotide sequence ID" value="XM_054354591.1"/>
</dbReference>
<dbReference type="RefSeq" id="XP_054210567.1">
    <molecule id="Q5T9G4-1"/>
    <property type="nucleotide sequence ID" value="XM_054354592.1"/>
</dbReference>
<dbReference type="SMR" id="Q5T9G4"/>
<dbReference type="BioGRID" id="128733">
    <property type="interactions" value="75"/>
</dbReference>
<dbReference type="FunCoup" id="Q5T9G4">
    <property type="interactions" value="80"/>
</dbReference>
<dbReference type="IntAct" id="Q5T9G4">
    <property type="interactions" value="13"/>
</dbReference>
<dbReference type="STRING" id="9606.ENSP00000288065"/>
<dbReference type="iPTMnet" id="Q5T9G4"/>
<dbReference type="PhosphoSitePlus" id="Q5T9G4"/>
<dbReference type="BioMuta" id="ARMC12"/>
<dbReference type="DMDM" id="74745673"/>
<dbReference type="MassIVE" id="Q5T9G4"/>
<dbReference type="PaxDb" id="9606-ENSP00000288065"/>
<dbReference type="PeptideAtlas" id="Q5T9G4"/>
<dbReference type="ProteomicsDB" id="64799">
    <molecule id="Q5T9G4-1"/>
</dbReference>
<dbReference type="ProteomicsDB" id="64800">
    <molecule id="Q5T9G4-2"/>
</dbReference>
<dbReference type="ProteomicsDB" id="64801">
    <molecule id="Q5T9G4-3"/>
</dbReference>
<dbReference type="TopDownProteomics" id="Q5T9G4-2">
    <molecule id="Q5T9G4-2"/>
</dbReference>
<dbReference type="Antibodypedia" id="29544">
    <property type="antibodies" value="26 antibodies from 8 providers"/>
</dbReference>
<dbReference type="DNASU" id="221481"/>
<dbReference type="Ensembl" id="ENST00000288065.6">
    <molecule id="Q5T9G4-2"/>
    <property type="protein sequence ID" value="ENSP00000288065.2"/>
    <property type="gene ID" value="ENSG00000157343.9"/>
</dbReference>
<dbReference type="Ensembl" id="ENST00000373866.4">
    <molecule id="Q5T9G4-1"/>
    <property type="protein sequence ID" value="ENSP00000362973.3"/>
    <property type="gene ID" value="ENSG00000157343.9"/>
</dbReference>
<dbReference type="Ensembl" id="ENST00000373869.7">
    <molecule id="Q5T9G4-3"/>
    <property type="protein sequence ID" value="ENSP00000362976.3"/>
    <property type="gene ID" value="ENSG00000157343.9"/>
</dbReference>
<dbReference type="GeneID" id="221481"/>
<dbReference type="KEGG" id="hsa:221481"/>
<dbReference type="MANE-Select" id="ENST00000373866.4">
    <property type="protein sequence ID" value="ENSP00000362973.3"/>
    <property type="RefSeq nucleotide sequence ID" value="NM_001286574.2"/>
    <property type="RefSeq protein sequence ID" value="NP_001273503.1"/>
</dbReference>
<dbReference type="UCSC" id="uc003ola.5">
    <molecule id="Q5T9G4-1"/>
    <property type="organism name" value="human"/>
</dbReference>
<dbReference type="AGR" id="HGNC:21099"/>
<dbReference type="CTD" id="221481"/>
<dbReference type="DisGeNET" id="221481"/>
<dbReference type="GeneCards" id="ARMC12"/>
<dbReference type="HGNC" id="HGNC:21099">
    <property type="gene designation" value="ARMC12"/>
</dbReference>
<dbReference type="HPA" id="ENSG00000157343">
    <property type="expression patterns" value="Tissue enriched (testis)"/>
</dbReference>
<dbReference type="MalaCards" id="ARMC12"/>
<dbReference type="MIM" id="620377">
    <property type="type" value="gene"/>
</dbReference>
<dbReference type="MIM" id="620744">
    <property type="type" value="phenotype"/>
</dbReference>
<dbReference type="neXtProt" id="NX_Q5T9G4"/>
<dbReference type="OpenTargets" id="ENSG00000157343"/>
<dbReference type="Orphanet" id="137893">
    <property type="disease" value="Male infertility due to large-headed multiflagellar polyploid spermatozoa"/>
</dbReference>
<dbReference type="PharmGKB" id="PA134885894"/>
<dbReference type="VEuPathDB" id="HostDB:ENSG00000157343"/>
<dbReference type="eggNOG" id="ENOG502QTRM">
    <property type="taxonomic scope" value="Eukaryota"/>
</dbReference>
<dbReference type="GeneTree" id="ENSGT00390000003856"/>
<dbReference type="HOGENOM" id="CLU_070346_0_0_1"/>
<dbReference type="InParanoid" id="Q5T9G4"/>
<dbReference type="OMA" id="WDTELHV"/>
<dbReference type="OrthoDB" id="9931937at2759"/>
<dbReference type="PAN-GO" id="Q5T9G4">
    <property type="GO annotations" value="1 GO annotation based on evolutionary models"/>
</dbReference>
<dbReference type="PhylomeDB" id="Q5T9G4"/>
<dbReference type="TreeFam" id="TF337134"/>
<dbReference type="PathwayCommons" id="Q5T9G4"/>
<dbReference type="SignaLink" id="Q5T9G4"/>
<dbReference type="BioGRID-ORCS" id="221481">
    <property type="hits" value="11 hits in 1148 CRISPR screens"/>
</dbReference>
<dbReference type="GenomeRNAi" id="221481"/>
<dbReference type="Pharos" id="Q5T9G4">
    <property type="development level" value="Tdark"/>
</dbReference>
<dbReference type="PRO" id="PR:Q5T9G4"/>
<dbReference type="Proteomes" id="UP000005640">
    <property type="component" value="Chromosome 6"/>
</dbReference>
<dbReference type="RNAct" id="Q5T9G4">
    <property type="molecule type" value="protein"/>
</dbReference>
<dbReference type="Bgee" id="ENSG00000157343">
    <property type="expression patterns" value="Expressed in right testis and 98 other cell types or tissues"/>
</dbReference>
<dbReference type="ExpressionAtlas" id="Q5T9G4">
    <property type="expression patterns" value="baseline and differential"/>
</dbReference>
<dbReference type="GO" id="GO:0005741">
    <property type="term" value="C:mitochondrial outer membrane"/>
    <property type="evidence" value="ECO:0000250"/>
    <property type="project" value="UniProtKB"/>
</dbReference>
<dbReference type="GO" id="GO:0005634">
    <property type="term" value="C:nucleus"/>
    <property type="evidence" value="ECO:0000314"/>
    <property type="project" value="UniProtKB"/>
</dbReference>
<dbReference type="GO" id="GO:0030317">
    <property type="term" value="P:flagellated sperm motility"/>
    <property type="evidence" value="ECO:0000250"/>
    <property type="project" value="UniProtKB"/>
</dbReference>
<dbReference type="GO" id="GO:0030307">
    <property type="term" value="P:positive regulation of cell growth"/>
    <property type="evidence" value="ECO:0000315"/>
    <property type="project" value="UniProtKB"/>
</dbReference>
<dbReference type="GO" id="GO:0120317">
    <property type="term" value="P:sperm mitochondrial sheath assembly"/>
    <property type="evidence" value="ECO:0000315"/>
    <property type="project" value="UniProtKB"/>
</dbReference>
<dbReference type="FunFam" id="1.25.10.10:FF:000454">
    <property type="entry name" value="Armadillo repeat containing 12"/>
    <property type="match status" value="1"/>
</dbReference>
<dbReference type="Gene3D" id="1.25.10.10">
    <property type="entry name" value="Leucine-rich Repeat Variant"/>
    <property type="match status" value="1"/>
</dbReference>
<dbReference type="InterPro" id="IPR011989">
    <property type="entry name" value="ARM-like"/>
</dbReference>
<dbReference type="InterPro" id="IPR006911">
    <property type="entry name" value="ARM-rpt_dom"/>
</dbReference>
<dbReference type="InterPro" id="IPR016024">
    <property type="entry name" value="ARM-type_fold"/>
</dbReference>
<dbReference type="InterPro" id="IPR042834">
    <property type="entry name" value="Armc12"/>
</dbReference>
<dbReference type="PANTHER" id="PTHR47144">
    <property type="entry name" value="ARMADILLO REPEAT-CONTAINING PROTEIN 12"/>
    <property type="match status" value="1"/>
</dbReference>
<dbReference type="PANTHER" id="PTHR47144:SF1">
    <property type="entry name" value="ARMADILLO REPEAT-CONTAINING PROTEIN 12"/>
    <property type="match status" value="1"/>
</dbReference>
<dbReference type="Pfam" id="PF04826">
    <property type="entry name" value="Arm_2"/>
    <property type="match status" value="1"/>
</dbReference>
<dbReference type="SUPFAM" id="SSF48371">
    <property type="entry name" value="ARM repeat"/>
    <property type="match status" value="1"/>
</dbReference>
<keyword id="KW-0025">Alternative splicing</keyword>
<keyword id="KW-0221">Differentiation</keyword>
<keyword id="KW-0472">Membrane</keyword>
<keyword id="KW-0496">Mitochondrion</keyword>
<keyword id="KW-1000">Mitochondrion outer membrane</keyword>
<keyword id="KW-0539">Nucleus</keyword>
<keyword id="KW-1267">Proteomics identification</keyword>
<keyword id="KW-1185">Reference proteome</keyword>
<keyword id="KW-0677">Repeat</keyword>
<keyword id="KW-0744">Spermatogenesis</keyword>